<protein>
    <recommendedName>
        <fullName>Endoglucanase</fullName>
        <ecNumber>3.2.1.4</ecNumber>
    </recommendedName>
    <alternativeName>
        <fullName>Cellulase</fullName>
    </alternativeName>
    <alternativeName>
        <fullName>Endo-1,4-beta-glucanase</fullName>
    </alternativeName>
</protein>
<accession>P17974</accession>
<comment type="catalytic activity">
    <reaction>
        <text>Endohydrolysis of (1-&gt;4)-beta-D-glucosidic linkages in cellulose, lichenin and cereal beta-D-glucans.</text>
        <dbReference type="EC" id="3.2.1.4"/>
    </reaction>
</comment>
<comment type="subcellular location">
    <subcellularLocation>
        <location evidence="4">Cell membrane</location>
        <topology evidence="4">Lipid-anchor</topology>
    </subcellularLocation>
</comment>
<comment type="similarity">
    <text evidence="4">Belongs to the glycosyl hydrolase 5 (cellulase A) family.</text>
</comment>
<evidence type="ECO:0000250" key="1"/>
<evidence type="ECO:0000255" key="2">
    <source>
        <dbReference type="PROSITE-ProRule" id="PRU00303"/>
    </source>
</evidence>
<evidence type="ECO:0000269" key="3">
    <source>
    </source>
</evidence>
<evidence type="ECO:0000305" key="4"/>
<dbReference type="EC" id="3.2.1.4"/>
<dbReference type="EMBL" id="M84922">
    <property type="protein sequence ID" value="AAA61980.1"/>
    <property type="molecule type" value="Genomic_DNA"/>
</dbReference>
<dbReference type="PIR" id="A42649">
    <property type="entry name" value="A42649"/>
</dbReference>
<dbReference type="SMR" id="P17974"/>
<dbReference type="CAZy" id="GH5">
    <property type="family name" value="Glycoside Hydrolase Family 5"/>
</dbReference>
<dbReference type="GO" id="GO:0005886">
    <property type="term" value="C:plasma membrane"/>
    <property type="evidence" value="ECO:0007669"/>
    <property type="project" value="UniProtKB-SubCell"/>
</dbReference>
<dbReference type="GO" id="GO:0008810">
    <property type="term" value="F:cellulase activity"/>
    <property type="evidence" value="ECO:0007669"/>
    <property type="project" value="UniProtKB-EC"/>
</dbReference>
<dbReference type="GO" id="GO:0030245">
    <property type="term" value="P:cellulose catabolic process"/>
    <property type="evidence" value="ECO:0007669"/>
    <property type="project" value="UniProtKB-KW"/>
</dbReference>
<dbReference type="FunFam" id="3.20.20.80:FF:000124">
    <property type="entry name" value="Exported cellulase"/>
    <property type="match status" value="1"/>
</dbReference>
<dbReference type="Gene3D" id="3.20.20.80">
    <property type="entry name" value="Glycosidases"/>
    <property type="match status" value="1"/>
</dbReference>
<dbReference type="InterPro" id="IPR001547">
    <property type="entry name" value="Glyco_hydro_5"/>
</dbReference>
<dbReference type="InterPro" id="IPR018087">
    <property type="entry name" value="Glyco_hydro_5_CS"/>
</dbReference>
<dbReference type="InterPro" id="IPR017853">
    <property type="entry name" value="Glycoside_hydrolase_SF"/>
</dbReference>
<dbReference type="PANTHER" id="PTHR34142">
    <property type="entry name" value="ENDO-BETA-1,4-GLUCANASE A"/>
    <property type="match status" value="1"/>
</dbReference>
<dbReference type="PANTHER" id="PTHR34142:SF1">
    <property type="entry name" value="GLYCOSIDE HYDROLASE FAMILY 5 DOMAIN-CONTAINING PROTEIN"/>
    <property type="match status" value="1"/>
</dbReference>
<dbReference type="Pfam" id="PF00150">
    <property type="entry name" value="Cellulase"/>
    <property type="match status" value="1"/>
</dbReference>
<dbReference type="SUPFAM" id="SSF51445">
    <property type="entry name" value="(Trans)glycosidases"/>
    <property type="match status" value="1"/>
</dbReference>
<dbReference type="PROSITE" id="PS00659">
    <property type="entry name" value="GLYCOSYL_HYDROL_F5"/>
    <property type="match status" value="1"/>
</dbReference>
<dbReference type="PROSITE" id="PS51257">
    <property type="entry name" value="PROKAR_LIPOPROTEIN"/>
    <property type="match status" value="1"/>
</dbReference>
<name>GUN_RALSL</name>
<reference key="1">
    <citation type="journal article" date="1992" name="J. Bacteriol.">
        <title>Role of the two-component leader sequence and mature amino acid sequences in extracellular export of endoglucanase EGL from Pseudomonas solanacearum.</title>
        <authorList>
            <person name="Huang J."/>
            <person name="Schell M.A."/>
        </authorList>
    </citation>
    <scope>NUCLEOTIDE SEQUENCE [GENOMIC DNA]</scope>
    <source>
        <strain>AW</strain>
    </source>
</reference>
<reference key="2">
    <citation type="journal article" date="1989" name="J. Bacteriol.">
        <title>Excretion of the egl gene product of Pseudomonas solanacearum.</title>
        <authorList>
            <person name="Huang J."/>
            <person name="Sukordhaman M."/>
            <person name="Schell M.A."/>
        </authorList>
    </citation>
    <scope>NUCLEOTIDE SEQUENCE [GENOMIC DNA] OF 1-112</scope>
    <scope>PARTIAL PROTEIN SEQUENCE</scope>
</reference>
<reference key="3">
    <citation type="journal article" date="1990" name="J. Biol. Chem.">
        <title>Evidence that extracellular export of the endoglucanase encoded by egl of Pseudomonas solanacearum occurs by a two-step process involving a lipoprotein intermediate.</title>
        <authorList>
            <person name="Huang J."/>
            <person name="Schell M.A."/>
        </authorList>
    </citation>
    <scope>PROTEOLYTIC PROCESSING</scope>
    <scope>DIACYLGLYCEROL AT CYS-20</scope>
    <scope>PALMITOYLATION AT CYS-20</scope>
</reference>
<feature type="signal peptide">
    <location>
        <begin position="1"/>
        <end position="19"/>
    </location>
</feature>
<feature type="propeptide" id="PRO_0000007869">
    <location>
        <begin position="20"/>
        <end position="45"/>
    </location>
</feature>
<feature type="chain" id="PRO_0000007870" description="Endoglucanase">
    <location>
        <begin position="46"/>
        <end position="426"/>
    </location>
</feature>
<feature type="active site" description="Proton donor" evidence="1">
    <location>
        <position position="249"/>
    </location>
</feature>
<feature type="active site" description="Nucleophile" evidence="1">
    <location>
        <position position="361"/>
    </location>
</feature>
<feature type="lipid moiety-binding region" description="N-palmitoyl cysteine" evidence="2 3">
    <location>
        <position position="20"/>
    </location>
</feature>
<feature type="lipid moiety-binding region" description="S-diacylglycerol cysteine" evidence="2 3">
    <location>
        <position position="20"/>
    </location>
</feature>
<proteinExistence type="evidence at protein level"/>
<sequence length="426" mass="45578">MRRCMPLVAASVAALMLAGCGGGDGDPSLSTASVSATDTTTLKPAATSTTSSVWLTLAKDSAAFTVSGTRTVRYGAGSAWVEKSVSGSGRCTSTFFGKDPAAGVAKVCQLLQGTGTLLWRGVSLAGAEFGEGSLPGTYGSNYIYPSADSVTYYKNKGMNLVRLPFRWERLQPTLNQVFDANELSRLTGFVNAVTATGQTVLLDPHNYARYYGNVIGSSAVPNSAYADFWRRLATQFKSNPRVILGLMNEPNSMPTEQWLSGANAELAAIRSANASNVVFVPGNAWTGAHSWNQNWYGTPNGTVMKGINDPGHNLVFEVHQYLDGDSSGQSANCVSATIGAQRLQDFTTWLRSNGYRGFLGEFGAASNDTCNQAVSNMLTFVKNNADVWTGWAWWAGGPWWGGYMYSIEPSNGVDKPQMSVLAPYLK</sequence>
<keyword id="KW-0119">Carbohydrate metabolism</keyword>
<keyword id="KW-1003">Cell membrane</keyword>
<keyword id="KW-0136">Cellulose degradation</keyword>
<keyword id="KW-0903">Direct protein sequencing</keyword>
<keyword id="KW-0326">Glycosidase</keyword>
<keyword id="KW-0378">Hydrolase</keyword>
<keyword id="KW-0449">Lipoprotein</keyword>
<keyword id="KW-0472">Membrane</keyword>
<keyword id="KW-0564">Palmitate</keyword>
<keyword id="KW-0624">Polysaccharide degradation</keyword>
<keyword id="KW-0732">Signal</keyword>
<keyword id="KW-0865">Zymogen</keyword>
<gene>
    <name type="primary">egl</name>
</gene>
<organism>
    <name type="scientific">Ralstonia solanacearum</name>
    <name type="common">Pseudomonas solanacearum</name>
    <dbReference type="NCBI Taxonomy" id="305"/>
    <lineage>
        <taxon>Bacteria</taxon>
        <taxon>Pseudomonadati</taxon>
        <taxon>Pseudomonadota</taxon>
        <taxon>Betaproteobacteria</taxon>
        <taxon>Burkholderiales</taxon>
        <taxon>Burkholderiaceae</taxon>
        <taxon>Ralstonia</taxon>
        <taxon>Ralstonia solanacearum species complex</taxon>
    </lineage>
</organism>